<dbReference type="EC" id="3.5.4.29"/>
<dbReference type="EMBL" id="L77117">
    <property type="protein sequence ID" value="AAB98128.1"/>
    <property type="molecule type" value="Genomic_DNA"/>
</dbReference>
<dbReference type="PIR" id="B64318">
    <property type="entry name" value="B64318"/>
</dbReference>
<dbReference type="RefSeq" id="WP_010869640.1">
    <property type="nucleotide sequence ID" value="NC_000909.1"/>
</dbReference>
<dbReference type="PDB" id="2QV6">
    <property type="method" value="X-ray"/>
    <property type="resolution" value="2.00 A"/>
    <property type="chains" value="A/B/C/D=1-268"/>
</dbReference>
<dbReference type="PDBsum" id="2QV6"/>
<dbReference type="SMR" id="Q57609"/>
<dbReference type="FunCoup" id="Q57609">
    <property type="interactions" value="9"/>
</dbReference>
<dbReference type="STRING" id="243232.MJ_0145"/>
<dbReference type="PaxDb" id="243232-MJ_0145"/>
<dbReference type="EnsemblBacteria" id="AAB98128">
    <property type="protein sequence ID" value="AAB98128"/>
    <property type="gene ID" value="MJ_0145"/>
</dbReference>
<dbReference type="GeneID" id="1450989"/>
<dbReference type="KEGG" id="mja:MJ_0145"/>
<dbReference type="eggNOG" id="arCOG04202">
    <property type="taxonomic scope" value="Archaea"/>
</dbReference>
<dbReference type="HOGENOM" id="CLU_080076_0_0_2"/>
<dbReference type="InParanoid" id="Q57609"/>
<dbReference type="OrthoDB" id="25211at2157"/>
<dbReference type="PhylomeDB" id="Q57609"/>
<dbReference type="BioCyc" id="MetaCyc:MONOMER-14598"/>
<dbReference type="BRENDA" id="3.5.4.29">
    <property type="organism ID" value="3260"/>
</dbReference>
<dbReference type="EvolutionaryTrace" id="Q57609"/>
<dbReference type="Proteomes" id="UP000000805">
    <property type="component" value="Chromosome"/>
</dbReference>
<dbReference type="GO" id="GO:0005525">
    <property type="term" value="F:GTP binding"/>
    <property type="evidence" value="ECO:0007669"/>
    <property type="project" value="UniProtKB-KW"/>
</dbReference>
<dbReference type="GO" id="GO:0043740">
    <property type="term" value="F:GTP cyclohydrolase IIa activity"/>
    <property type="evidence" value="ECO:0007669"/>
    <property type="project" value="UniProtKB-EC"/>
</dbReference>
<dbReference type="GO" id="GO:0009058">
    <property type="term" value="P:biosynthetic process"/>
    <property type="evidence" value="ECO:0007669"/>
    <property type="project" value="InterPro"/>
</dbReference>
<dbReference type="Gene3D" id="3.30.70.270">
    <property type="match status" value="1"/>
</dbReference>
<dbReference type="Gene3D" id="3.30.70.1230">
    <property type="entry name" value="Nucleotide cyclase"/>
    <property type="match status" value="1"/>
</dbReference>
<dbReference type="HAMAP" id="MF_00608">
    <property type="entry name" value="GTP_cyclohydro_3"/>
    <property type="match status" value="1"/>
</dbReference>
<dbReference type="InterPro" id="IPR007839">
    <property type="entry name" value="GTP_CycHdrlase_3"/>
</dbReference>
<dbReference type="InterPro" id="IPR029787">
    <property type="entry name" value="Nucleotide_cyclase"/>
</dbReference>
<dbReference type="InterPro" id="IPR043128">
    <property type="entry name" value="Rev_trsase/Diguanyl_cyclase"/>
</dbReference>
<dbReference type="NCBIfam" id="NF002587">
    <property type="entry name" value="PRK02240.1"/>
    <property type="match status" value="1"/>
</dbReference>
<dbReference type="PANTHER" id="PTHR42202">
    <property type="entry name" value="GTP CYCLOHYDROLASE III"/>
    <property type="match status" value="1"/>
</dbReference>
<dbReference type="PANTHER" id="PTHR42202:SF1">
    <property type="entry name" value="GTP CYCLOHYDROLASE III"/>
    <property type="match status" value="1"/>
</dbReference>
<dbReference type="Pfam" id="PF05165">
    <property type="entry name" value="GCH_III"/>
    <property type="match status" value="1"/>
</dbReference>
<dbReference type="PIRSF" id="PIRSF009265">
    <property type="entry name" value="GTP_cyclohydro_3"/>
    <property type="match status" value="1"/>
</dbReference>
<name>GCH3_METJA</name>
<accession>Q57609</accession>
<comment type="function">
    <text>Catalyzes the formation of 2-amino-5-formylamino-6-ribofuranosylamino-4(3H)-pyrimidinone ribonucleotide monophosphate and inorganic phosphate from GTP. Also has an independent pyrophosphate phosphohydrolase activity.</text>
</comment>
<comment type="catalytic activity">
    <reaction>
        <text>GTP + 3 H2O = 2-amino-5-formylamino-6-(5-phospho-D-ribosylamino)pyrimidin-4(3H)-one + 2 phosphate + 2 H(+)</text>
        <dbReference type="Rhea" id="RHEA:22468"/>
        <dbReference type="ChEBI" id="CHEBI:15377"/>
        <dbReference type="ChEBI" id="CHEBI:15378"/>
        <dbReference type="ChEBI" id="CHEBI:37565"/>
        <dbReference type="ChEBI" id="CHEBI:43474"/>
        <dbReference type="ChEBI" id="CHEBI:57258"/>
        <dbReference type="EC" id="3.5.4.29"/>
    </reaction>
</comment>
<comment type="cofactor">
    <cofactor>
        <name>Mg(2+)</name>
        <dbReference type="ChEBI" id="CHEBI:18420"/>
    </cofactor>
</comment>
<comment type="subunit">
    <text>Homotrimer.</text>
</comment>
<comment type="mass spectrometry"/>
<comment type="miscellaneous">
    <text>This enzyme couples pyrophosphate hydrolysis to the guanine ring-opening reaction. GTP cyclohydrolase and pyrophosphate phosphoydrolase activities probably occur at independent sites.</text>
</comment>
<comment type="similarity">
    <text evidence="2">Belongs to the archaeal-type GTP cyclohydrolase family.</text>
</comment>
<evidence type="ECO:0000269" key="1">
    <source>
    </source>
</evidence>
<evidence type="ECO:0000305" key="2"/>
<evidence type="ECO:0007829" key="3">
    <source>
        <dbReference type="PDB" id="2QV6"/>
    </source>
</evidence>
<sequence>MIQITVIQIDNYGPWTVTPNPRRESDLQALQSRLYADLNLMFGAHKGLVFYTRFDNLIAITNGIDLITHKRIQESIRNRYPFTVSMVIASAETPYEAQKLATETLQEYGSAQDENRKEVLDVANELVVDGYVQIAHIDINNITGTLTDIVSAYDTYLNVNKVKLALMEELLKYNALLFFIGGDNFMAPSNGMSEEDFLDIFNRINKKYKIELKAGIGIGRTAEDASNLADIGLEKIRGKLVDKNVCTLKQDDFLESKMGMGKIYHPQF</sequence>
<feature type="chain" id="PRO_0000145754" description="GTP cyclohydrolase III">
    <location>
        <begin position="1"/>
        <end position="268"/>
    </location>
</feature>
<feature type="mutagenesis site" description="Decrease in GTP cyclohydrolase and pyrophosphate phosphohydrolase activities." evidence="1">
    <original>H</original>
    <variation>Q</variation>
    <location>
        <position position="136"/>
    </location>
</feature>
<feature type="strand" evidence="3">
    <location>
        <begin position="2"/>
        <end position="9"/>
    </location>
</feature>
<feature type="helix" evidence="3">
    <location>
        <begin position="12"/>
        <end position="17"/>
    </location>
</feature>
<feature type="strand" evidence="3">
    <location>
        <begin position="18"/>
        <end position="20"/>
    </location>
</feature>
<feature type="helix" evidence="3">
    <location>
        <begin position="24"/>
        <end position="43"/>
    </location>
</feature>
<feature type="turn" evidence="3">
    <location>
        <begin position="44"/>
        <end position="46"/>
    </location>
</feature>
<feature type="strand" evidence="3">
    <location>
        <begin position="48"/>
        <end position="50"/>
    </location>
</feature>
<feature type="strand" evidence="3">
    <location>
        <begin position="54"/>
        <end position="60"/>
    </location>
</feature>
<feature type="helix" evidence="3">
    <location>
        <begin position="66"/>
        <end position="79"/>
    </location>
</feature>
<feature type="strand" evidence="3">
    <location>
        <begin position="80"/>
        <end position="82"/>
    </location>
</feature>
<feature type="strand" evidence="3">
    <location>
        <begin position="84"/>
        <end position="93"/>
    </location>
</feature>
<feature type="helix" evidence="3">
    <location>
        <begin position="94"/>
        <end position="108"/>
    </location>
</feature>
<feature type="strand" evidence="3">
    <location>
        <begin position="120"/>
        <end position="124"/>
    </location>
</feature>
<feature type="strand" evidence="3">
    <location>
        <begin position="132"/>
        <end position="139"/>
    </location>
</feature>
<feature type="helix" evidence="3">
    <location>
        <begin position="142"/>
        <end position="145"/>
    </location>
</feature>
<feature type="turn" evidence="3">
    <location>
        <begin position="146"/>
        <end position="149"/>
    </location>
</feature>
<feature type="helix" evidence="3">
    <location>
        <begin position="152"/>
        <end position="171"/>
    </location>
</feature>
<feature type="turn" evidence="3">
    <location>
        <begin position="172"/>
        <end position="174"/>
    </location>
</feature>
<feature type="strand" evidence="3">
    <location>
        <begin position="178"/>
        <end position="181"/>
    </location>
</feature>
<feature type="strand" evidence="3">
    <location>
        <begin position="184"/>
        <end position="188"/>
    </location>
</feature>
<feature type="helix" evidence="3">
    <location>
        <begin position="194"/>
        <end position="208"/>
    </location>
</feature>
<feature type="strand" evidence="3">
    <location>
        <begin position="212"/>
        <end position="221"/>
    </location>
</feature>
<feature type="helix" evidence="3">
    <location>
        <begin position="222"/>
        <end position="237"/>
    </location>
</feature>
<feature type="strand" evidence="3">
    <location>
        <begin position="241"/>
        <end position="249"/>
    </location>
</feature>
<proteinExistence type="evidence at protein level"/>
<keyword id="KW-0002">3D-structure</keyword>
<keyword id="KW-0342">GTP-binding</keyword>
<keyword id="KW-0378">Hydrolase</keyword>
<keyword id="KW-0460">Magnesium</keyword>
<keyword id="KW-0547">Nucleotide-binding</keyword>
<keyword id="KW-1185">Reference proteome</keyword>
<reference key="1">
    <citation type="journal article" date="1996" name="Science">
        <title>Complete genome sequence of the methanogenic archaeon, Methanococcus jannaschii.</title>
        <authorList>
            <person name="Bult C.J."/>
            <person name="White O."/>
            <person name="Olsen G.J."/>
            <person name="Zhou L."/>
            <person name="Fleischmann R.D."/>
            <person name="Sutton G.G."/>
            <person name="Blake J.A."/>
            <person name="FitzGerald L.M."/>
            <person name="Clayton R.A."/>
            <person name="Gocayne J.D."/>
            <person name="Kerlavage A.R."/>
            <person name="Dougherty B.A."/>
            <person name="Tomb J.-F."/>
            <person name="Adams M.D."/>
            <person name="Reich C.I."/>
            <person name="Overbeek R."/>
            <person name="Kirkness E.F."/>
            <person name="Weinstock K.G."/>
            <person name="Merrick J.M."/>
            <person name="Glodek A."/>
            <person name="Scott J.L."/>
            <person name="Geoghagen N.S.M."/>
            <person name="Weidman J.F."/>
            <person name="Fuhrmann J.L."/>
            <person name="Nguyen D."/>
            <person name="Utterback T.R."/>
            <person name="Kelley J.M."/>
            <person name="Peterson J.D."/>
            <person name="Sadow P.W."/>
            <person name="Hanna M.C."/>
            <person name="Cotton M.D."/>
            <person name="Roberts K.M."/>
            <person name="Hurst M.A."/>
            <person name="Kaine B.P."/>
            <person name="Borodovsky M."/>
            <person name="Klenk H.-P."/>
            <person name="Fraser C.M."/>
            <person name="Smith H.O."/>
            <person name="Woese C.R."/>
            <person name="Venter J.C."/>
        </authorList>
    </citation>
    <scope>NUCLEOTIDE SEQUENCE [LARGE SCALE GENOMIC DNA]</scope>
    <source>
        <strain>ATCC 43067 / DSM 2661 / JAL-1 / JCM 10045 / NBRC 100440</strain>
    </source>
</reference>
<reference key="2">
    <citation type="journal article" date="2002" name="Biochemistry">
        <title>A member of a new class of GTP cyclohydrolases produces formylaminopyrimidine nucleotide monophosphates.</title>
        <authorList>
            <person name="Graham D.E."/>
            <person name="Xu H."/>
            <person name="White R.H."/>
        </authorList>
    </citation>
    <scope>CHARACTERIZATION</scope>
    <scope>MUTAGENESIS OF HIS-136</scope>
    <scope>MASS SPECTROMETRY</scope>
    <source>
        <strain>ATCC 43067 / DSM 2661 / JAL-1 / JCM 10045 / NBRC 100440</strain>
    </source>
</reference>
<gene>
    <name type="primary">gch3</name>
    <name type="ordered locus">MJ0145</name>
</gene>
<protein>
    <recommendedName>
        <fullName>GTP cyclohydrolase III</fullName>
        <ecNumber>3.5.4.29</ecNumber>
    </recommendedName>
    <alternativeName>
        <fullName>MjGC</fullName>
    </alternativeName>
</protein>
<organism>
    <name type="scientific">Methanocaldococcus jannaschii (strain ATCC 43067 / DSM 2661 / JAL-1 / JCM 10045 / NBRC 100440)</name>
    <name type="common">Methanococcus jannaschii</name>
    <dbReference type="NCBI Taxonomy" id="243232"/>
    <lineage>
        <taxon>Archaea</taxon>
        <taxon>Methanobacteriati</taxon>
        <taxon>Methanobacteriota</taxon>
        <taxon>Methanomada group</taxon>
        <taxon>Methanococci</taxon>
        <taxon>Methanococcales</taxon>
        <taxon>Methanocaldococcaceae</taxon>
        <taxon>Methanocaldococcus</taxon>
    </lineage>
</organism>